<feature type="chain" id="PRO_1000184999" description="UPF0473 protein SPN23F01880">
    <location>
        <begin position="1"/>
        <end position="101"/>
    </location>
</feature>
<gene>
    <name type="ordered locus">SPN23F01880</name>
</gene>
<dbReference type="EMBL" id="FM211187">
    <property type="protein sequence ID" value="CAR68048.1"/>
    <property type="molecule type" value="Genomic_DNA"/>
</dbReference>
<dbReference type="RefSeq" id="WP_000017620.1">
    <property type="nucleotide sequence ID" value="NC_011900.1"/>
</dbReference>
<dbReference type="KEGG" id="sne:SPN23F01880"/>
<dbReference type="HOGENOM" id="CLU_146610_2_1_9"/>
<dbReference type="HAMAP" id="MF_01448">
    <property type="entry name" value="UPF0473"/>
    <property type="match status" value="1"/>
</dbReference>
<dbReference type="InterPro" id="IPR009711">
    <property type="entry name" value="UPF0473"/>
</dbReference>
<dbReference type="NCBIfam" id="NF010215">
    <property type="entry name" value="PRK13678.1-2"/>
    <property type="match status" value="1"/>
</dbReference>
<dbReference type="NCBIfam" id="NF010217">
    <property type="entry name" value="PRK13678.1-4"/>
    <property type="match status" value="1"/>
</dbReference>
<dbReference type="PANTHER" id="PTHR40066">
    <property type="entry name" value="UPF0473 PROTEIN CBO2561/CLC_2432"/>
    <property type="match status" value="1"/>
</dbReference>
<dbReference type="PANTHER" id="PTHR40066:SF1">
    <property type="entry name" value="UPF0473 PROTEIN CBO2561_CLC_2432"/>
    <property type="match status" value="1"/>
</dbReference>
<dbReference type="Pfam" id="PF06949">
    <property type="entry name" value="DUF1292"/>
    <property type="match status" value="1"/>
</dbReference>
<comment type="similarity">
    <text evidence="1">Belongs to the UPF0473 family.</text>
</comment>
<proteinExistence type="inferred from homology"/>
<reference key="1">
    <citation type="journal article" date="2009" name="J. Bacteriol.">
        <title>Role of conjugative elements in the evolution of the multidrug-resistant pandemic clone Streptococcus pneumoniae Spain23F ST81.</title>
        <authorList>
            <person name="Croucher N.J."/>
            <person name="Walker D."/>
            <person name="Romero P."/>
            <person name="Lennard N."/>
            <person name="Paterson G.K."/>
            <person name="Bason N.C."/>
            <person name="Mitchell A.M."/>
            <person name="Quail M.A."/>
            <person name="Andrew P.W."/>
            <person name="Parkhill J."/>
            <person name="Bentley S.D."/>
            <person name="Mitchell T.J."/>
        </authorList>
    </citation>
    <scope>NUCLEOTIDE SEQUENCE [LARGE SCALE GENOMIC DNA]</scope>
    <source>
        <strain>ATCC 700669 / Spain 23F-1</strain>
    </source>
</reference>
<sequence length="101" mass="11759">MSHDHNHDHEERELITLVDEQGNETLFEILLTIDGKEEFGKNYVLLVPVNAEEDEDGQVEIQAYSFIENEDGTEGELQPIPEDSEDEWNMIEEVFNSFMEE</sequence>
<organism>
    <name type="scientific">Streptococcus pneumoniae (strain ATCC 700669 / Spain 23F-1)</name>
    <dbReference type="NCBI Taxonomy" id="561276"/>
    <lineage>
        <taxon>Bacteria</taxon>
        <taxon>Bacillati</taxon>
        <taxon>Bacillota</taxon>
        <taxon>Bacilli</taxon>
        <taxon>Lactobacillales</taxon>
        <taxon>Streptococcaceae</taxon>
        <taxon>Streptococcus</taxon>
    </lineage>
</organism>
<name>Y188_STRPJ</name>
<protein>
    <recommendedName>
        <fullName evidence="1">UPF0473 protein SPN23F01880</fullName>
    </recommendedName>
</protein>
<evidence type="ECO:0000255" key="1">
    <source>
        <dbReference type="HAMAP-Rule" id="MF_01448"/>
    </source>
</evidence>
<accession>B8ZKE6</accession>